<gene>
    <name evidence="5" type="primary">Ndufaf5</name>
</gene>
<comment type="function">
    <text evidence="1">Arginine hydroxylase that mediates hydroxylation of 'Arg-122' of NDUFS7 and is involved in the assembly of mitochondrial NADH:ubiquinone oxidoreductase complex (complex I, MT-ND1) at early stages. May also have methyltransferase activity.</text>
</comment>
<comment type="subunit">
    <text evidence="1">Interacts with NDUFAF8, leading to stabilize NDUFAF5. Interacts with NDUFS7. Interacts with PYURF (via TRM112 domain); the interaction is direct and stabilizes NDUFAF5 protein (By similarity).</text>
</comment>
<comment type="subcellular location">
    <subcellularLocation>
        <location evidence="1">Mitochondrion inner membrane</location>
    </subcellularLocation>
    <text evidence="1">Peripherally localized on the matrix face of the mitochondrial inner membrane.</text>
</comment>
<comment type="alternative products">
    <event type="alternative splicing"/>
    <isoform>
        <id>A2APY7-1</id>
        <name>1</name>
        <sequence type="displayed"/>
    </isoform>
    <isoform>
        <id>A2APY7-2</id>
        <name>2</name>
        <sequence type="described" ref="VSP_028638"/>
    </isoform>
</comment>
<comment type="similarity">
    <text evidence="4">Belongs to the methyltransferase superfamily.</text>
</comment>
<comment type="sequence caution" evidence="4">
    <conflict type="erroneous initiation">
        <sequence resource="EMBL-CDS" id="AAH05630"/>
    </conflict>
    <text>Truncated N-terminus.</text>
</comment>
<name>NDUF5_MOUSE</name>
<sequence>MLRKVVLLRLCPLLGRPAVSASSGSRREVASGVPPSGSTSPRALNIFDRELKRKQKNWAARQPDPMKFDYLKEEVGSRIADRVYDIARDFPLALDIGCGRGYIAQHLDKETVGKIFQTDIAEHALKNSLETDIPTVNILADEEFLPFQENTFDLVVSSLSLHWVNDLPRALEQIHYVLKPDGVFVGAMFGGDTLYELRCSLQLAETEREGGFSPHISPFTAVNDLGHLLGRAGFNTLTVDTDEIQVNYPGMFELMEDLKGMGESNCSWNRKALLHRDTMLAAAAVYREMYRNEDGSIPATFQIYHMIGWKYHDSQARPAERGSATVSFGELAKLNDVMSHEKK</sequence>
<accession>A2APY7</accession>
<accession>Q9D7L6</accession>
<feature type="transit peptide" description="Mitochondrion" evidence="2">
    <location>
        <begin position="1"/>
        <end position="29"/>
    </location>
</feature>
<feature type="chain" id="PRO_0000307214" description="Arginine-hydroxylase NDUFAF5, mitochondrial">
    <location>
        <begin position="30"/>
        <end position="343"/>
    </location>
</feature>
<feature type="splice variant" id="VSP_028638" description="In isoform 2." evidence="3">
    <location>
        <begin position="1"/>
        <end position="187"/>
    </location>
</feature>
<protein>
    <recommendedName>
        <fullName>Arginine-hydroxylase NDUFAF5, mitochondrial</fullName>
        <ecNumber evidence="1">1.-.-.-</ecNumber>
    </recommendedName>
    <alternativeName>
        <fullName evidence="5">NADH dehydrogenase [ubiquinone] 1 alpha subcomplex assembly factor 5</fullName>
    </alternativeName>
    <alternativeName>
        <fullName evidence="4">Putative methyltransferase NDUFAF5</fullName>
        <ecNumber evidence="4">2.1.1.-</ecNumber>
    </alternativeName>
</protein>
<organism>
    <name type="scientific">Mus musculus</name>
    <name type="common">Mouse</name>
    <dbReference type="NCBI Taxonomy" id="10090"/>
    <lineage>
        <taxon>Eukaryota</taxon>
        <taxon>Metazoa</taxon>
        <taxon>Chordata</taxon>
        <taxon>Craniata</taxon>
        <taxon>Vertebrata</taxon>
        <taxon>Euteleostomi</taxon>
        <taxon>Mammalia</taxon>
        <taxon>Eutheria</taxon>
        <taxon>Euarchontoglires</taxon>
        <taxon>Glires</taxon>
        <taxon>Rodentia</taxon>
        <taxon>Myomorpha</taxon>
        <taxon>Muroidea</taxon>
        <taxon>Muridae</taxon>
        <taxon>Murinae</taxon>
        <taxon>Mus</taxon>
        <taxon>Mus</taxon>
    </lineage>
</organism>
<dbReference type="EC" id="1.-.-.-" evidence="1"/>
<dbReference type="EC" id="2.1.1.-" evidence="4"/>
<dbReference type="EMBL" id="AK009123">
    <property type="protein sequence ID" value="BAB26088.1"/>
    <property type="molecule type" value="mRNA"/>
</dbReference>
<dbReference type="EMBL" id="AL844528">
    <property type="status" value="NOT_ANNOTATED_CDS"/>
    <property type="molecule type" value="Genomic_DNA"/>
</dbReference>
<dbReference type="EMBL" id="BC005630">
    <property type="protein sequence ID" value="AAH05630.1"/>
    <property type="status" value="ALT_INIT"/>
    <property type="molecule type" value="mRNA"/>
</dbReference>
<dbReference type="CCDS" id="CCDS16804.2">
    <molecule id="A2APY7-1"/>
</dbReference>
<dbReference type="RefSeq" id="NP_081369.2">
    <molecule id="A2APY7-1"/>
    <property type="nucleotide sequence ID" value="NM_027093.4"/>
</dbReference>
<dbReference type="RefSeq" id="XP_030107913.1">
    <molecule id="A2APY7-2"/>
    <property type="nucleotide sequence ID" value="XM_030252053.2"/>
</dbReference>
<dbReference type="RefSeq" id="XP_036018430.1">
    <molecule id="A2APY7-2"/>
    <property type="nucleotide sequence ID" value="XM_036162537.1"/>
</dbReference>
<dbReference type="SMR" id="A2APY7"/>
<dbReference type="FunCoup" id="A2APY7">
    <property type="interactions" value="1080"/>
</dbReference>
<dbReference type="STRING" id="10090.ENSMUSP00000035325"/>
<dbReference type="iPTMnet" id="A2APY7"/>
<dbReference type="PhosphoSitePlus" id="A2APY7"/>
<dbReference type="PaxDb" id="10090-ENSMUSP00000035325"/>
<dbReference type="PeptideAtlas" id="A2APY7"/>
<dbReference type="ProteomicsDB" id="286168">
    <molecule id="A2APY7-1"/>
</dbReference>
<dbReference type="ProteomicsDB" id="286169">
    <molecule id="A2APY7-2"/>
</dbReference>
<dbReference type="Pumba" id="A2APY7"/>
<dbReference type="Antibodypedia" id="24277">
    <property type="antibodies" value="129 antibodies from 21 providers"/>
</dbReference>
<dbReference type="DNASU" id="69487"/>
<dbReference type="Ensembl" id="ENSMUST00000044825.5">
    <molecule id="A2APY7-1"/>
    <property type="protein sequence ID" value="ENSMUSP00000035325.5"/>
    <property type="gene ID" value="ENSMUSG00000027384.7"/>
</dbReference>
<dbReference type="GeneID" id="69487"/>
<dbReference type="KEGG" id="mmu:69487"/>
<dbReference type="UCSC" id="uc008mpo.2">
    <molecule id="A2APY7-1"/>
    <property type="organism name" value="mouse"/>
</dbReference>
<dbReference type="UCSC" id="uc008mpp.2">
    <molecule id="A2APY7-2"/>
    <property type="organism name" value="mouse"/>
</dbReference>
<dbReference type="AGR" id="MGI:1916737"/>
<dbReference type="CTD" id="79133"/>
<dbReference type="MGI" id="MGI:1916737">
    <property type="gene designation" value="Ndufaf5"/>
</dbReference>
<dbReference type="VEuPathDB" id="HostDB:ENSMUSG00000027384"/>
<dbReference type="eggNOG" id="KOG2940">
    <property type="taxonomic scope" value="Eukaryota"/>
</dbReference>
<dbReference type="GeneTree" id="ENSGT00390000014687"/>
<dbReference type="HOGENOM" id="CLU_046586_0_2_1"/>
<dbReference type="InParanoid" id="A2APY7"/>
<dbReference type="OMA" id="YEVVYGH"/>
<dbReference type="OrthoDB" id="16816at2759"/>
<dbReference type="PhylomeDB" id="A2APY7"/>
<dbReference type="TreeFam" id="TF315222"/>
<dbReference type="Reactome" id="R-MMU-6799198">
    <property type="pathway name" value="Complex I biogenesis"/>
</dbReference>
<dbReference type="BioGRID-ORCS" id="69487">
    <property type="hits" value="24 hits in 81 CRISPR screens"/>
</dbReference>
<dbReference type="PRO" id="PR:A2APY7"/>
<dbReference type="Proteomes" id="UP000000589">
    <property type="component" value="Chromosome 2"/>
</dbReference>
<dbReference type="RNAct" id="A2APY7">
    <property type="molecule type" value="protein"/>
</dbReference>
<dbReference type="Bgee" id="ENSMUSG00000027384">
    <property type="expression patterns" value="Expressed in hindlimb stylopod muscle and 253 other cell types or tissues"/>
</dbReference>
<dbReference type="GO" id="GO:0099617">
    <property type="term" value="C:matrix side of mitochondrial inner membrane"/>
    <property type="evidence" value="ECO:0007669"/>
    <property type="project" value="Ensembl"/>
</dbReference>
<dbReference type="GO" id="GO:0005739">
    <property type="term" value="C:mitochondrion"/>
    <property type="evidence" value="ECO:0007005"/>
    <property type="project" value="MGI"/>
</dbReference>
<dbReference type="GO" id="GO:0004497">
    <property type="term" value="F:monooxygenase activity"/>
    <property type="evidence" value="ECO:0000250"/>
    <property type="project" value="UniProtKB"/>
</dbReference>
<dbReference type="GO" id="GO:0008757">
    <property type="term" value="F:S-adenosylmethionine-dependent methyltransferase activity"/>
    <property type="evidence" value="ECO:0007669"/>
    <property type="project" value="InterPro"/>
</dbReference>
<dbReference type="GO" id="GO:0032259">
    <property type="term" value="P:methylation"/>
    <property type="evidence" value="ECO:0007669"/>
    <property type="project" value="UniProtKB-KW"/>
</dbReference>
<dbReference type="GO" id="GO:0032981">
    <property type="term" value="P:mitochondrial respiratory chain complex I assembly"/>
    <property type="evidence" value="ECO:0000250"/>
    <property type="project" value="UniProtKB"/>
</dbReference>
<dbReference type="CDD" id="cd02440">
    <property type="entry name" value="AdoMet_MTases"/>
    <property type="match status" value="1"/>
</dbReference>
<dbReference type="FunFam" id="3.40.50.150:FF:000199">
    <property type="entry name" value="arginine-hydroxylase NDUFAF5, mitochondrial isoform X1"/>
    <property type="match status" value="1"/>
</dbReference>
<dbReference type="Gene3D" id="3.40.50.150">
    <property type="entry name" value="Vaccinia Virus protein VP39"/>
    <property type="match status" value="1"/>
</dbReference>
<dbReference type="InterPro" id="IPR050602">
    <property type="entry name" value="Malonyl-ACP_OMT"/>
</dbReference>
<dbReference type="InterPro" id="IPR013216">
    <property type="entry name" value="Methyltransf_11"/>
</dbReference>
<dbReference type="InterPro" id="IPR029063">
    <property type="entry name" value="SAM-dependent_MTases_sf"/>
</dbReference>
<dbReference type="PANTHER" id="PTHR13090">
    <property type="entry name" value="ARGININE-HYDROXYLASE NDUFAF5, MITOCHONDRIAL"/>
    <property type="match status" value="1"/>
</dbReference>
<dbReference type="PANTHER" id="PTHR13090:SF1">
    <property type="entry name" value="ARGININE-HYDROXYLASE NDUFAF5, MITOCHONDRIAL"/>
    <property type="match status" value="1"/>
</dbReference>
<dbReference type="Pfam" id="PF08241">
    <property type="entry name" value="Methyltransf_11"/>
    <property type="match status" value="1"/>
</dbReference>
<dbReference type="SUPFAM" id="SSF53335">
    <property type="entry name" value="S-adenosyl-L-methionine-dependent methyltransferases"/>
    <property type="match status" value="1"/>
</dbReference>
<reference key="1">
    <citation type="journal article" date="2005" name="Science">
        <title>The transcriptional landscape of the mammalian genome.</title>
        <authorList>
            <person name="Carninci P."/>
            <person name="Kasukawa T."/>
            <person name="Katayama S."/>
            <person name="Gough J."/>
            <person name="Frith M.C."/>
            <person name="Maeda N."/>
            <person name="Oyama R."/>
            <person name="Ravasi T."/>
            <person name="Lenhard B."/>
            <person name="Wells C."/>
            <person name="Kodzius R."/>
            <person name="Shimokawa K."/>
            <person name="Bajic V.B."/>
            <person name="Brenner S.E."/>
            <person name="Batalov S."/>
            <person name="Forrest A.R."/>
            <person name="Zavolan M."/>
            <person name="Davis M.J."/>
            <person name="Wilming L.G."/>
            <person name="Aidinis V."/>
            <person name="Allen J.E."/>
            <person name="Ambesi-Impiombato A."/>
            <person name="Apweiler R."/>
            <person name="Aturaliya R.N."/>
            <person name="Bailey T.L."/>
            <person name="Bansal M."/>
            <person name="Baxter L."/>
            <person name="Beisel K.W."/>
            <person name="Bersano T."/>
            <person name="Bono H."/>
            <person name="Chalk A.M."/>
            <person name="Chiu K.P."/>
            <person name="Choudhary V."/>
            <person name="Christoffels A."/>
            <person name="Clutterbuck D.R."/>
            <person name="Crowe M.L."/>
            <person name="Dalla E."/>
            <person name="Dalrymple B.P."/>
            <person name="de Bono B."/>
            <person name="Della Gatta G."/>
            <person name="di Bernardo D."/>
            <person name="Down T."/>
            <person name="Engstrom P."/>
            <person name="Fagiolini M."/>
            <person name="Faulkner G."/>
            <person name="Fletcher C.F."/>
            <person name="Fukushima T."/>
            <person name="Furuno M."/>
            <person name="Futaki S."/>
            <person name="Gariboldi M."/>
            <person name="Georgii-Hemming P."/>
            <person name="Gingeras T.R."/>
            <person name="Gojobori T."/>
            <person name="Green R.E."/>
            <person name="Gustincich S."/>
            <person name="Harbers M."/>
            <person name="Hayashi Y."/>
            <person name="Hensch T.K."/>
            <person name="Hirokawa N."/>
            <person name="Hill D."/>
            <person name="Huminiecki L."/>
            <person name="Iacono M."/>
            <person name="Ikeo K."/>
            <person name="Iwama A."/>
            <person name="Ishikawa T."/>
            <person name="Jakt M."/>
            <person name="Kanapin A."/>
            <person name="Katoh M."/>
            <person name="Kawasawa Y."/>
            <person name="Kelso J."/>
            <person name="Kitamura H."/>
            <person name="Kitano H."/>
            <person name="Kollias G."/>
            <person name="Krishnan S.P."/>
            <person name="Kruger A."/>
            <person name="Kummerfeld S.K."/>
            <person name="Kurochkin I.V."/>
            <person name="Lareau L.F."/>
            <person name="Lazarevic D."/>
            <person name="Lipovich L."/>
            <person name="Liu J."/>
            <person name="Liuni S."/>
            <person name="McWilliam S."/>
            <person name="Madan Babu M."/>
            <person name="Madera M."/>
            <person name="Marchionni L."/>
            <person name="Matsuda H."/>
            <person name="Matsuzawa S."/>
            <person name="Miki H."/>
            <person name="Mignone F."/>
            <person name="Miyake S."/>
            <person name="Morris K."/>
            <person name="Mottagui-Tabar S."/>
            <person name="Mulder N."/>
            <person name="Nakano N."/>
            <person name="Nakauchi H."/>
            <person name="Ng P."/>
            <person name="Nilsson R."/>
            <person name="Nishiguchi S."/>
            <person name="Nishikawa S."/>
            <person name="Nori F."/>
            <person name="Ohara O."/>
            <person name="Okazaki Y."/>
            <person name="Orlando V."/>
            <person name="Pang K.C."/>
            <person name="Pavan W.J."/>
            <person name="Pavesi G."/>
            <person name="Pesole G."/>
            <person name="Petrovsky N."/>
            <person name="Piazza S."/>
            <person name="Reed J."/>
            <person name="Reid J.F."/>
            <person name="Ring B.Z."/>
            <person name="Ringwald M."/>
            <person name="Rost B."/>
            <person name="Ruan Y."/>
            <person name="Salzberg S.L."/>
            <person name="Sandelin A."/>
            <person name="Schneider C."/>
            <person name="Schoenbach C."/>
            <person name="Sekiguchi K."/>
            <person name="Semple C.A."/>
            <person name="Seno S."/>
            <person name="Sessa L."/>
            <person name="Sheng Y."/>
            <person name="Shibata Y."/>
            <person name="Shimada H."/>
            <person name="Shimada K."/>
            <person name="Silva D."/>
            <person name="Sinclair B."/>
            <person name="Sperling S."/>
            <person name="Stupka E."/>
            <person name="Sugiura K."/>
            <person name="Sultana R."/>
            <person name="Takenaka Y."/>
            <person name="Taki K."/>
            <person name="Tammoja K."/>
            <person name="Tan S.L."/>
            <person name="Tang S."/>
            <person name="Taylor M.S."/>
            <person name="Tegner J."/>
            <person name="Teichmann S.A."/>
            <person name="Ueda H.R."/>
            <person name="van Nimwegen E."/>
            <person name="Verardo R."/>
            <person name="Wei C.L."/>
            <person name="Yagi K."/>
            <person name="Yamanishi H."/>
            <person name="Zabarovsky E."/>
            <person name="Zhu S."/>
            <person name="Zimmer A."/>
            <person name="Hide W."/>
            <person name="Bult C."/>
            <person name="Grimmond S.M."/>
            <person name="Teasdale R.D."/>
            <person name="Liu E.T."/>
            <person name="Brusic V."/>
            <person name="Quackenbush J."/>
            <person name="Wahlestedt C."/>
            <person name="Mattick J.S."/>
            <person name="Hume D.A."/>
            <person name="Kai C."/>
            <person name="Sasaki D."/>
            <person name="Tomaru Y."/>
            <person name="Fukuda S."/>
            <person name="Kanamori-Katayama M."/>
            <person name="Suzuki M."/>
            <person name="Aoki J."/>
            <person name="Arakawa T."/>
            <person name="Iida J."/>
            <person name="Imamura K."/>
            <person name="Itoh M."/>
            <person name="Kato T."/>
            <person name="Kawaji H."/>
            <person name="Kawagashira N."/>
            <person name="Kawashima T."/>
            <person name="Kojima M."/>
            <person name="Kondo S."/>
            <person name="Konno H."/>
            <person name="Nakano K."/>
            <person name="Ninomiya N."/>
            <person name="Nishio T."/>
            <person name="Okada M."/>
            <person name="Plessy C."/>
            <person name="Shibata K."/>
            <person name="Shiraki T."/>
            <person name="Suzuki S."/>
            <person name="Tagami M."/>
            <person name="Waki K."/>
            <person name="Watahiki A."/>
            <person name="Okamura-Oho Y."/>
            <person name="Suzuki H."/>
            <person name="Kawai J."/>
            <person name="Hayashizaki Y."/>
        </authorList>
    </citation>
    <scope>NUCLEOTIDE SEQUENCE [LARGE SCALE MRNA] (ISOFORM 2)</scope>
    <source>
        <strain>C57BL/6J</strain>
        <tissue>Tongue</tissue>
    </source>
</reference>
<reference key="2">
    <citation type="journal article" date="2009" name="PLoS Biol.">
        <title>Lineage-specific biology revealed by a finished genome assembly of the mouse.</title>
        <authorList>
            <person name="Church D.M."/>
            <person name="Goodstadt L."/>
            <person name="Hillier L.W."/>
            <person name="Zody M.C."/>
            <person name="Goldstein S."/>
            <person name="She X."/>
            <person name="Bult C.J."/>
            <person name="Agarwala R."/>
            <person name="Cherry J.L."/>
            <person name="DiCuccio M."/>
            <person name="Hlavina W."/>
            <person name="Kapustin Y."/>
            <person name="Meric P."/>
            <person name="Maglott D."/>
            <person name="Birtle Z."/>
            <person name="Marques A.C."/>
            <person name="Graves T."/>
            <person name="Zhou S."/>
            <person name="Teague B."/>
            <person name="Potamousis K."/>
            <person name="Churas C."/>
            <person name="Place M."/>
            <person name="Herschleb J."/>
            <person name="Runnheim R."/>
            <person name="Forrest D."/>
            <person name="Amos-Landgraf J."/>
            <person name="Schwartz D.C."/>
            <person name="Cheng Z."/>
            <person name="Lindblad-Toh K."/>
            <person name="Eichler E.E."/>
            <person name="Ponting C.P."/>
        </authorList>
    </citation>
    <scope>NUCLEOTIDE SEQUENCE [LARGE SCALE GENOMIC DNA]</scope>
    <source>
        <strain>C57BL/6J</strain>
    </source>
</reference>
<reference key="3">
    <citation type="journal article" date="2004" name="Genome Res.">
        <title>The status, quality, and expansion of the NIH full-length cDNA project: the Mammalian Gene Collection (MGC).</title>
        <authorList>
            <consortium name="The MGC Project Team"/>
        </authorList>
    </citation>
    <scope>NUCLEOTIDE SEQUENCE [LARGE SCALE MRNA] OF 24-343 (ISOFORM 1)</scope>
    <source>
        <strain>FVB/N</strain>
        <tissue>Mammary tumor</tissue>
    </source>
</reference>
<reference key="4">
    <citation type="journal article" date="2010" name="Cell">
        <title>A tissue-specific atlas of mouse protein phosphorylation and expression.</title>
        <authorList>
            <person name="Huttlin E.L."/>
            <person name="Jedrychowski M.P."/>
            <person name="Elias J.E."/>
            <person name="Goswami T."/>
            <person name="Rad R."/>
            <person name="Beausoleil S.A."/>
            <person name="Villen J."/>
            <person name="Haas W."/>
            <person name="Sowa M.E."/>
            <person name="Gygi S.P."/>
        </authorList>
    </citation>
    <scope>IDENTIFICATION BY MASS SPECTROMETRY [LARGE SCALE ANALYSIS]</scope>
    <source>
        <tissue>Brain</tissue>
        <tissue>Brown adipose tissue</tissue>
        <tissue>Heart</tissue>
    </source>
</reference>
<keyword id="KW-0025">Alternative splicing</keyword>
<keyword id="KW-0472">Membrane</keyword>
<keyword id="KW-0489">Methyltransferase</keyword>
<keyword id="KW-0496">Mitochondrion</keyword>
<keyword id="KW-0999">Mitochondrion inner membrane</keyword>
<keyword id="KW-0560">Oxidoreductase</keyword>
<keyword id="KW-1185">Reference proteome</keyword>
<keyword id="KW-0808">Transferase</keyword>
<keyword id="KW-0809">Transit peptide</keyword>
<evidence type="ECO:0000250" key="1">
    <source>
        <dbReference type="UniProtKB" id="Q5TEU4"/>
    </source>
</evidence>
<evidence type="ECO:0000255" key="2"/>
<evidence type="ECO:0000303" key="3">
    <source>
    </source>
</evidence>
<evidence type="ECO:0000305" key="4"/>
<evidence type="ECO:0000312" key="5">
    <source>
        <dbReference type="MGI" id="MGI:1916737"/>
    </source>
</evidence>
<proteinExistence type="evidence at protein level"/>